<comment type="function">
    <text evidence="7">Non-reducing polyketide synthase; part of the gene cluster that mediates the biosynthesis of novofumigatonin, a heavily oxygenated meroterpenoid containing a unique orthoester moiety (PubMed:29968715). The first step of the pathway is the synthesis of 3,5-dimethylorsellinic acid (DMOA) by the polyketide synthase nvfA via condensation of one acetyl-CoA starter unit with 3 malonyl-CoA units and 2 methylations (PubMed:29968715). DMOA is then converted to farnesyl-DMOA by the farnesyltransferase nvfB (PubMed:29968715). Epoxydation by FAD-dependent monooxygenase nvfK, followed by a protonation-initiated cyclization catalyzed by the terpene cyclase nvfL leads to the production of asnavolin H (PubMed:29968715). The short chain dehydrogenase nvfC then as a 3-OH dehydrogenase of asnovolin H to yield chemesin D (PubMed:29968715). There are two branches to synthesize asnovolin A from chemesin D (PubMed:29968715). In one branch, chemesin D undergoes Baeyer-Villiger oxidation by nvfH, methylation by nvfJ, and enoyl reduction by the nvfM D enoylreductase that reduces the double bond between C-5'and C-6', to form respectively asnovolin I, asnovolin K, and asnovolin A (PubMed:29968715). In the other branch, the methylation precedes the Baeyer-Villiger oxidation and the enoyl reduction to yield asnovolin A via the asnovolin J intermediate (PubMed:29968715). Asnovolin A is further converted to fumigatonoid A by the Fe(II)/2-oxoglutarate-dependent dioxygenase nvfI that catalyzes an endoperoxidation reaction (PubMed:29968715). The alpha/beta hydrolase nvfD then acts as an epimerase that converts fumigatonoid A to its C-5' epimer, which then undergoes spontaneous or nvfD-catalyzed lactonization (PubMed:29968715). The following step utilizes the ketoreductase nvfG to produce fumigatonoid B (PubMed:29968715). The dioxygenase nvfE further converts fumigatonoid B into fumigatonoid C (PubMed:29968715). Finally the Fe(II)/2-oxoglutarate-dependent dioxygenase nvfF catalyzes two rounds of oxidation to transform fumigatonoid C into the end product, novofumigatonin A (PubMed:29968715).</text>
</comment>
<comment type="catalytic activity">
    <reaction evidence="7">
        <text>3 malonyl-CoA + acetyl-CoA + 2 S-adenosyl-L-methionine = 3,5-dimethylorsellinate + 2 S-adenosyl-L-homocysteine + 3 CO2 + 4 CoA</text>
        <dbReference type="Rhea" id="RHEA:49628"/>
        <dbReference type="ChEBI" id="CHEBI:16526"/>
        <dbReference type="ChEBI" id="CHEBI:57287"/>
        <dbReference type="ChEBI" id="CHEBI:57288"/>
        <dbReference type="ChEBI" id="CHEBI:57384"/>
        <dbReference type="ChEBI" id="CHEBI:57856"/>
        <dbReference type="ChEBI" id="CHEBI:59789"/>
        <dbReference type="ChEBI" id="CHEBI:131856"/>
    </reaction>
    <physiologicalReaction direction="left-to-right" evidence="7">
        <dbReference type="Rhea" id="RHEA:49629"/>
    </physiologicalReaction>
</comment>
<comment type="pathway">
    <text evidence="7">Secondary metabolite biosynthesis; terpenoid biosynthesis.</text>
</comment>
<comment type="domain">
    <text evidence="9">Multidomain protein; including a starter unit:ACP transacylase (SAT) that selects the starter unit; a ketosynthase (KS) that catalyzes repeated decarboxylative condensation to elongate the polyketide backbone; a malonyl-CoA:ACP transacylase (MAT) that selects and transfers the extender unit malonyl-CoA; a product template (PT) domain that controls the immediate cyclization regioselectivity of the reactive polyketide backbone; and an acyl-carrier protein (ACP) that serves as the tether of the growing and completed polyketide via its phosphopantetheinyl arm.</text>
</comment>
<comment type="domain">
    <text evidence="1">The release of the polyketide chain from the non-reducing polyketide synthase is mediated by the thioesterase (TE) domain localized at the C-ter of the protein.</text>
</comment>
<comment type="disruption phenotype">
    <text evidence="7">Completely abolishes the production of novofumigatonin as well as asnovolin A.</text>
</comment>
<protein>
    <recommendedName>
        <fullName evidence="8">Non-reducing polyketide synthase nvfA</fullName>
        <ecNumber evidence="7">2.3.1.-</ecNumber>
    </recommendedName>
    <alternativeName>
        <fullName evidence="8">Novofumigatonin biosynthesis cluster protein A</fullName>
    </alternativeName>
</protein>
<evidence type="ECO:0000250" key="1">
    <source>
        <dbReference type="UniProtKB" id="Q5ATJ7"/>
    </source>
</evidence>
<evidence type="ECO:0000255" key="2"/>
<evidence type="ECO:0000255" key="3">
    <source>
        <dbReference type="PROSITE-ProRule" id="PRU00258"/>
    </source>
</evidence>
<evidence type="ECO:0000255" key="4">
    <source>
        <dbReference type="PROSITE-ProRule" id="PRU01348"/>
    </source>
</evidence>
<evidence type="ECO:0000255" key="5">
    <source>
        <dbReference type="PROSITE-ProRule" id="PRU01363"/>
    </source>
</evidence>
<evidence type="ECO:0000255" key="6">
    <source>
        <dbReference type="PROSITE-ProRule" id="PRU10022"/>
    </source>
</evidence>
<evidence type="ECO:0000269" key="7">
    <source>
    </source>
</evidence>
<evidence type="ECO:0000303" key="8">
    <source>
    </source>
</evidence>
<evidence type="ECO:0000305" key="9">
    <source>
    </source>
</evidence>
<keyword id="KW-0489">Methyltransferase</keyword>
<keyword id="KW-0511">Multifunctional enzyme</keyword>
<keyword id="KW-0596">Phosphopantetheine</keyword>
<keyword id="KW-0597">Phosphoprotein</keyword>
<keyword id="KW-1185">Reference proteome</keyword>
<keyword id="KW-0808">Transferase</keyword>
<feature type="chain" id="PRO_0000453076" description="Non-reducing polyketide synthase nvfA">
    <location>
        <begin position="1"/>
        <end position="2255"/>
    </location>
</feature>
<feature type="domain" description="Ketosynthase family 3 (KS3)" evidence="4">
    <location>
        <begin position="365"/>
        <end position="781"/>
    </location>
</feature>
<feature type="domain" description="PKS/mFAS DH" evidence="5">
    <location>
        <begin position="1229"/>
        <end position="1536"/>
    </location>
</feature>
<feature type="domain" description="Carrier" evidence="3">
    <location>
        <begin position="1581"/>
        <end position="1655"/>
    </location>
</feature>
<feature type="region of interest" description="N-terminal acylcarrier protein transacylase domain (SAT)" evidence="2">
    <location>
        <begin position="13"/>
        <end position="251"/>
    </location>
</feature>
<feature type="region of interest" description="Malonyl-CoA:ACP transacylase (MAT) domain" evidence="2">
    <location>
        <begin position="887"/>
        <end position="1187"/>
    </location>
</feature>
<feature type="region of interest" description="N-terminal hotdog fold" evidence="5">
    <location>
        <begin position="1229"/>
        <end position="1357"/>
    </location>
</feature>
<feature type="region of interest" description="Product template (PT) domain" evidence="2">
    <location>
        <begin position="1232"/>
        <end position="1535"/>
    </location>
</feature>
<feature type="region of interest" description="C-terminal hotdog fold" evidence="5">
    <location>
        <begin position="1385"/>
        <end position="1536"/>
    </location>
</feature>
<feature type="region of interest" description="Methyltransferase (CMeT) domain" evidence="2">
    <location>
        <begin position="1809"/>
        <end position="2042"/>
    </location>
</feature>
<feature type="region of interest" description="Thioesterase (TE) domain" evidence="2">
    <location>
        <begin position="2109"/>
        <end position="2227"/>
    </location>
</feature>
<feature type="active site" description="For beta-ketoacyl synthase activity" evidence="4">
    <location>
        <position position="530"/>
    </location>
</feature>
<feature type="active site" description="For beta-ketoacyl synthase activity" evidence="4">
    <location>
        <position position="665"/>
    </location>
</feature>
<feature type="active site" description="For beta-ketoacyl synthase activity" evidence="4">
    <location>
        <position position="704"/>
    </location>
</feature>
<feature type="active site" description="For acyl/malonyl transferase activity" evidence="6">
    <location>
        <position position="974"/>
    </location>
</feature>
<feature type="active site" description="Proton acceptor; for dehydratase activity" evidence="5">
    <location>
        <position position="1262"/>
    </location>
</feature>
<feature type="active site" description="Proton donor; for dehydratase activity" evidence="5">
    <location>
        <position position="1443"/>
    </location>
</feature>
<feature type="active site" description="For thioesterase activity" evidence="1">
    <location>
        <position position="2194"/>
    </location>
</feature>
<feature type="modified residue" description="O-(pantetheine 4'-phosphoryl)serine" evidence="3">
    <location>
        <position position="1615"/>
    </location>
</feature>
<proteinExistence type="evidence at protein level"/>
<sequence length="2255" mass="246067">MEPSDTERCDVGILFGPQSSDMDEALSCIRSYVLEQPAVRYLVDLVLELPSLWPEIKNAWPALSQVPGEEQLVALGRFFNGGPFPASDEAMNVITTPVTVIRHIVEFYKVKETMKGFQARDVQGFCVGFLAATAVAASCDETAFRALVSKIIRLAVCIGGLVDLDELAVHRARSMAVRWDGEEDYDRLEQVLAAHPEAYIACVTDANRATLTVPKSLAPQMIQDLANHGLSVREIRLCGRFHHPDHTAAVEQMSRLCERDCRFQLPDASSLSLPLRSNINGEVIRTGQLHTIALQSILCFRSQWLITVTAALASITMTDESIRLVSIGPHQCVPRMAQSKLIRTVTSSPVDGCYEAINGTGAAPVRPIAVTGMACRYPQANSVEELWEMLELGKCAVKPLPNDRLKMVELLREPKGPYWGHYLEEPDMFDHRFFGISAREAATMDPQQRLLLQVAYEAMESAGYCGLRSSQIPRDVGCYVGVGSDDYTDNVGSHHANAYSAPGTLQAFNTGRISHYFGWSGPSVVVDTACSSAAVAIHLACQALRTKDCSVAIAGGVNVMTSPKVTQNLAAASFLSPTGASKAFDADADGYCRGEGAGLVVLRPLEDAISDVDPILAVITGTAVNQGSNCSPITVPVSESQMSLYGKSLAASGIAPEDVTYVEAHGTGTQVGDPIEFDSIRRMFGGRHRSEELYVGSIKDNIGHTETSSGVAGLVKTILMMQKGRIPKQANFSRLNPKIPAPEGDRIVIPKQSTDWKSARRVAMVTNYGAAGSNAAIVLRQHTITTNTGSSWLSDVPVFVAAKSPESLRSYCYKMQAFLRQTAGLLGCTMRDITYNLAIKQNRDLDFLVSFPTPSQDPMTLLSQLESVAAGVTDLQQRPAQAPSVILCFGGQNGNTAHISQDLFAGCHLLQAHLADCEKICQSMGLPSLFPTIFQEEPIHDLVNLHCILFAIQYASAMCWIHSGLQVKRMLGHSFGQLTALCVAGGLTLIDAIRLVSERARLIETSWAGDHGVMLSVDASEAEVRALVNRAGDTVDLACYNGARSYVLAGDEISIQVVEKLADGMRIKRLPNTHAFHSRLVDSIVPGLRKLAQSLKYHPTTIPVEACSEDGSAWTCVTPDQIVAHSRMPVHFDSAVQRAANHVQGPVVWLEAGSASPIVSMVRRVVEESSSSRAHLYQASDLKSPQAQANLAKATSGLWANGIPTSHWTEYDPLAFLPASAPIAEASSEPMGLVQVLEKRPSECLFSVNTKDPLYRTCTQGHAVVEQNLCPASLYLEMVVSAAGCLSSAGLITAMPHLQELSISAPLVLEPDGDVLLRLSQSPAEKTAWTFSLFTQAGQKAPVSHATGRISLHPFDSTSTILSRFRSLDRLMNPSRPDSIASLPSSSGLKGSAVYQAFRRVVNYADYYRGVESVFCVSTEATGRVFVPLSLSRESACDPILIDNFVQVAGVHVNCLADVPEDEVYVCSAVGEAFIGEVFMKRDPAAPQPWRVYSNYDRLSKGQVACDVFVMDQKSGQLAIAILAATFTSVSIRALTRTLAKLNNHQPSMLATNEPSAGHKEVNSILNVVDRPPPTAATVDTNKFPAIQAMLSDLLGVGLDELSPYSSLMAIGVDSLMSTEVLTEIKKRFGVNITSAELGEIPDIQCLVQAIFPGASVAQKQATTSKMPPLSDLAESVFNGPAPPDALMLAQKAYDLFGTTQANTDYSQITKWAGFCESVFPKQMALVTAYVVEAFRALGYPLELLHAGQAVPLIPVLPQHESVRNQLYEVLKFSKLICRKDDGMFRTAEAVPSDTSLLLHEDIIKEYPHHASEHTLLRTTGSRLAECLSGSADPLALLFQNADARRVMEDVYTNAPMFKSATMHLAQYLQDLVILLRSRRDIKILEIGAGTGGTTKYLVSQLAAVPGLRFEYTFTDISTSLVTLAKKKFNGYSCIQYATLNIEQDPPDDLLGQYDIVLSTNCIHATRNIAHSCDNIRKLLRPDGILCLIELTRNLFWFDLVFGLLEGWWLFNDGRNHALATEQFWNESLRQAGYNWVNWSCNDSRESEILRLIVASPTLPHGASQILFRSPLVTEETVKYDEKDGVQLLADIYYPSEVDDAHRRRPIALLIHGGGHVMLSRKDIRSQQIKMLLNSGFLPVSIDYRLCPETSLTEGPMRDVRDALVWTRRTLPRLSLKRPDIRPNGDQVVAVGWSTGGHLAMTLSWTASLCGVRAPEAILSFYCPTDYSDPFWSQPNFPYGRDIAPQMKCTIFGMQ</sequence>
<gene>
    <name evidence="8" type="primary">nvfA</name>
    <name type="ORF">P174DRAFT_455569</name>
</gene>
<reference key="1">
    <citation type="journal article" date="2018" name="Proc. Natl. Acad. Sci. U.S.A.">
        <title>Linking secondary metabolites to gene clusters through genome sequencing of six diverse Aspergillus species.</title>
        <authorList>
            <person name="Kjaerboelling I."/>
            <person name="Vesth T.C."/>
            <person name="Frisvad J.C."/>
            <person name="Nybo J.L."/>
            <person name="Theobald S."/>
            <person name="Kuo A."/>
            <person name="Bowyer P."/>
            <person name="Matsuda Y."/>
            <person name="Mondo S."/>
            <person name="Lyhne E.K."/>
            <person name="Kogle M.E."/>
            <person name="Clum A."/>
            <person name="Lipzen A."/>
            <person name="Salamov A."/>
            <person name="Ngan C.Y."/>
            <person name="Daum C."/>
            <person name="Chiniquy J."/>
            <person name="Barry K."/>
            <person name="LaButti K."/>
            <person name="Haridas S."/>
            <person name="Simmons B.A."/>
            <person name="Magnuson J.K."/>
            <person name="Mortensen U.H."/>
            <person name="Larsen T.O."/>
            <person name="Grigoriev I.V."/>
            <person name="Baker S.E."/>
            <person name="Andersen M.R."/>
        </authorList>
    </citation>
    <scope>NUCLEOTIDE SEQUENCE [LARGE SCALE GENOMIC DNA]</scope>
    <source>
        <strain>IBT 16806</strain>
    </source>
</reference>
<reference key="2">
    <citation type="journal article" date="2018" name="Nat. Commun.">
        <title>Novofumigatonin biosynthesis involves a non-heme iron-dependent endoperoxide isomerase for orthoester formation.</title>
        <authorList>
            <person name="Matsuda Y."/>
            <person name="Bai T."/>
            <person name="Phippen C.B.W."/>
            <person name="Noedvig C.S."/>
            <person name="Kjaerboelling I."/>
            <person name="Vesth T.C."/>
            <person name="Andersen M.R."/>
            <person name="Mortensen U.H."/>
            <person name="Gotfredsen C.H."/>
            <person name="Abe I."/>
            <person name="Larsen T.O."/>
        </authorList>
    </citation>
    <scope>FUNCTION</scope>
    <scope>DISRUPTION PHENOTYPE</scope>
    <scope>CATALYTIC ACTIVITY</scope>
    <scope>PATHWAY</scope>
</reference>
<organism>
    <name type="scientific">Aspergillus novofumigatus (strain IBT 16806)</name>
    <dbReference type="NCBI Taxonomy" id="1392255"/>
    <lineage>
        <taxon>Eukaryota</taxon>
        <taxon>Fungi</taxon>
        <taxon>Dikarya</taxon>
        <taxon>Ascomycota</taxon>
        <taxon>Pezizomycotina</taxon>
        <taxon>Eurotiomycetes</taxon>
        <taxon>Eurotiomycetidae</taxon>
        <taxon>Eurotiales</taxon>
        <taxon>Aspergillaceae</taxon>
        <taxon>Aspergillus</taxon>
        <taxon>Aspergillus subgen. Fumigati</taxon>
    </lineage>
</organism>
<dbReference type="EC" id="2.3.1.-" evidence="7"/>
<dbReference type="EMBL" id="MSZS01000014">
    <property type="protein sequence ID" value="PKX88487.1"/>
    <property type="molecule type" value="Genomic_DNA"/>
</dbReference>
<dbReference type="SMR" id="A0A2I1BSV9"/>
<dbReference type="STRING" id="1392255.A0A2I1BSV9"/>
<dbReference type="VEuPathDB" id="FungiDB:P174DRAFT_455569"/>
<dbReference type="OMA" id="KDNIGHT"/>
<dbReference type="OrthoDB" id="429813at2759"/>
<dbReference type="UniPathway" id="UPA00213"/>
<dbReference type="Proteomes" id="UP000234474">
    <property type="component" value="Unassembled WGS sequence"/>
</dbReference>
<dbReference type="GO" id="GO:0004315">
    <property type="term" value="F:3-oxoacyl-[acyl-carrier-protein] synthase activity"/>
    <property type="evidence" value="ECO:0007669"/>
    <property type="project" value="InterPro"/>
</dbReference>
<dbReference type="GO" id="GO:0004312">
    <property type="term" value="F:fatty acid synthase activity"/>
    <property type="evidence" value="ECO:0007669"/>
    <property type="project" value="TreeGrafter"/>
</dbReference>
<dbReference type="GO" id="GO:0008168">
    <property type="term" value="F:methyltransferase activity"/>
    <property type="evidence" value="ECO:0007669"/>
    <property type="project" value="UniProtKB-KW"/>
</dbReference>
<dbReference type="GO" id="GO:0016218">
    <property type="term" value="F:polyketide synthase activity"/>
    <property type="evidence" value="ECO:0000314"/>
    <property type="project" value="UniProt"/>
</dbReference>
<dbReference type="GO" id="GO:0006633">
    <property type="term" value="P:fatty acid biosynthetic process"/>
    <property type="evidence" value="ECO:0007669"/>
    <property type="project" value="InterPro"/>
</dbReference>
<dbReference type="GO" id="GO:0032259">
    <property type="term" value="P:methylation"/>
    <property type="evidence" value="ECO:0007669"/>
    <property type="project" value="UniProtKB-KW"/>
</dbReference>
<dbReference type="GO" id="GO:0140782">
    <property type="term" value="P:novofumigatonin biosynthetic process"/>
    <property type="evidence" value="ECO:0000314"/>
    <property type="project" value="GO_Central"/>
</dbReference>
<dbReference type="CDD" id="cd02440">
    <property type="entry name" value="AdoMet_MTases"/>
    <property type="match status" value="1"/>
</dbReference>
<dbReference type="CDD" id="cd00833">
    <property type="entry name" value="PKS"/>
    <property type="match status" value="1"/>
</dbReference>
<dbReference type="Gene3D" id="3.30.70.3290">
    <property type="match status" value="1"/>
</dbReference>
<dbReference type="Gene3D" id="3.40.47.10">
    <property type="match status" value="1"/>
</dbReference>
<dbReference type="Gene3D" id="1.10.1200.10">
    <property type="entry name" value="ACP-like"/>
    <property type="match status" value="1"/>
</dbReference>
<dbReference type="Gene3D" id="3.40.50.1820">
    <property type="entry name" value="alpha/beta hydrolase"/>
    <property type="match status" value="1"/>
</dbReference>
<dbReference type="Gene3D" id="3.40.366.10">
    <property type="entry name" value="Malonyl-Coenzyme A Acyl Carrier Protein, domain 2"/>
    <property type="match status" value="2"/>
</dbReference>
<dbReference type="Gene3D" id="3.10.129.110">
    <property type="entry name" value="Polyketide synthase dehydratase"/>
    <property type="match status" value="1"/>
</dbReference>
<dbReference type="Gene3D" id="3.40.50.150">
    <property type="entry name" value="Vaccinia Virus protein VP39"/>
    <property type="match status" value="1"/>
</dbReference>
<dbReference type="InterPro" id="IPR029058">
    <property type="entry name" value="AB_hydrolase_fold"/>
</dbReference>
<dbReference type="InterPro" id="IPR001227">
    <property type="entry name" value="Ac_transferase_dom_sf"/>
</dbReference>
<dbReference type="InterPro" id="IPR036736">
    <property type="entry name" value="ACP-like_sf"/>
</dbReference>
<dbReference type="InterPro" id="IPR014043">
    <property type="entry name" value="Acyl_transferase_dom"/>
</dbReference>
<dbReference type="InterPro" id="IPR016035">
    <property type="entry name" value="Acyl_Trfase/lysoPLipase"/>
</dbReference>
<dbReference type="InterPro" id="IPR049492">
    <property type="entry name" value="BD-FAE-like_dom"/>
</dbReference>
<dbReference type="InterPro" id="IPR018201">
    <property type="entry name" value="Ketoacyl_synth_AS"/>
</dbReference>
<dbReference type="InterPro" id="IPR014031">
    <property type="entry name" value="Ketoacyl_synth_C"/>
</dbReference>
<dbReference type="InterPro" id="IPR014030">
    <property type="entry name" value="Ketoacyl_synth_N"/>
</dbReference>
<dbReference type="InterPro" id="IPR016036">
    <property type="entry name" value="Malonyl_transacylase_ACP-bd"/>
</dbReference>
<dbReference type="InterPro" id="IPR013217">
    <property type="entry name" value="Methyltransf_12"/>
</dbReference>
<dbReference type="InterPro" id="IPR020841">
    <property type="entry name" value="PKS_Beta-ketoAc_synthase_dom"/>
</dbReference>
<dbReference type="InterPro" id="IPR042104">
    <property type="entry name" value="PKS_dehydratase_sf"/>
</dbReference>
<dbReference type="InterPro" id="IPR020807">
    <property type="entry name" value="PKS_DH"/>
</dbReference>
<dbReference type="InterPro" id="IPR049552">
    <property type="entry name" value="PKS_DH_N"/>
</dbReference>
<dbReference type="InterPro" id="IPR049900">
    <property type="entry name" value="PKS_mFAS_DH"/>
</dbReference>
<dbReference type="InterPro" id="IPR050091">
    <property type="entry name" value="PKS_NRPS_Biosynth_Enz"/>
</dbReference>
<dbReference type="InterPro" id="IPR009081">
    <property type="entry name" value="PP-bd_ACP"/>
</dbReference>
<dbReference type="InterPro" id="IPR006162">
    <property type="entry name" value="Ppantetheine_attach_site"/>
</dbReference>
<dbReference type="InterPro" id="IPR029063">
    <property type="entry name" value="SAM-dependent_MTases_sf"/>
</dbReference>
<dbReference type="InterPro" id="IPR032088">
    <property type="entry name" value="SAT"/>
</dbReference>
<dbReference type="InterPro" id="IPR016039">
    <property type="entry name" value="Thiolase-like"/>
</dbReference>
<dbReference type="PANTHER" id="PTHR43775">
    <property type="entry name" value="FATTY ACID SYNTHASE"/>
    <property type="match status" value="1"/>
</dbReference>
<dbReference type="PANTHER" id="PTHR43775:SF21">
    <property type="entry name" value="NON-REDUCING POLYKETIDE SYNTHASE AUSA-RELATED"/>
    <property type="match status" value="1"/>
</dbReference>
<dbReference type="Pfam" id="PF00698">
    <property type="entry name" value="Acyl_transf_1"/>
    <property type="match status" value="1"/>
</dbReference>
<dbReference type="Pfam" id="PF20434">
    <property type="entry name" value="BD-FAE"/>
    <property type="match status" value="1"/>
</dbReference>
<dbReference type="Pfam" id="PF18558">
    <property type="entry name" value="HTH_51"/>
    <property type="match status" value="1"/>
</dbReference>
<dbReference type="Pfam" id="PF00109">
    <property type="entry name" value="ketoacyl-synt"/>
    <property type="match status" value="1"/>
</dbReference>
<dbReference type="Pfam" id="PF02801">
    <property type="entry name" value="Ketoacyl-synt_C"/>
    <property type="match status" value="1"/>
</dbReference>
<dbReference type="Pfam" id="PF08242">
    <property type="entry name" value="Methyltransf_12"/>
    <property type="match status" value="1"/>
</dbReference>
<dbReference type="Pfam" id="PF21089">
    <property type="entry name" value="PKS_DH_N"/>
    <property type="match status" value="1"/>
</dbReference>
<dbReference type="Pfam" id="PF00550">
    <property type="entry name" value="PP-binding"/>
    <property type="match status" value="1"/>
</dbReference>
<dbReference type="Pfam" id="PF16073">
    <property type="entry name" value="SAT"/>
    <property type="match status" value="1"/>
</dbReference>
<dbReference type="SMART" id="SM00827">
    <property type="entry name" value="PKS_AT"/>
    <property type="match status" value="1"/>
</dbReference>
<dbReference type="SMART" id="SM00826">
    <property type="entry name" value="PKS_DH"/>
    <property type="match status" value="1"/>
</dbReference>
<dbReference type="SMART" id="SM00825">
    <property type="entry name" value="PKS_KS"/>
    <property type="match status" value="1"/>
</dbReference>
<dbReference type="SUPFAM" id="SSF47336">
    <property type="entry name" value="ACP-like"/>
    <property type="match status" value="1"/>
</dbReference>
<dbReference type="SUPFAM" id="SSF53474">
    <property type="entry name" value="alpha/beta-Hydrolases"/>
    <property type="match status" value="1"/>
</dbReference>
<dbReference type="SUPFAM" id="SSF52151">
    <property type="entry name" value="FabD/lysophospholipase-like"/>
    <property type="match status" value="1"/>
</dbReference>
<dbReference type="SUPFAM" id="SSF55048">
    <property type="entry name" value="Probable ACP-binding domain of malonyl-CoA ACP transacylase"/>
    <property type="match status" value="1"/>
</dbReference>
<dbReference type="SUPFAM" id="SSF53335">
    <property type="entry name" value="S-adenosyl-L-methionine-dependent methyltransferases"/>
    <property type="match status" value="1"/>
</dbReference>
<dbReference type="SUPFAM" id="SSF53901">
    <property type="entry name" value="Thiolase-like"/>
    <property type="match status" value="1"/>
</dbReference>
<dbReference type="PROSITE" id="PS50075">
    <property type="entry name" value="CARRIER"/>
    <property type="match status" value="1"/>
</dbReference>
<dbReference type="PROSITE" id="PS00606">
    <property type="entry name" value="KS3_1"/>
    <property type="match status" value="1"/>
</dbReference>
<dbReference type="PROSITE" id="PS52004">
    <property type="entry name" value="KS3_2"/>
    <property type="match status" value="1"/>
</dbReference>
<dbReference type="PROSITE" id="PS00012">
    <property type="entry name" value="PHOSPHOPANTETHEINE"/>
    <property type="match status" value="1"/>
</dbReference>
<dbReference type="PROSITE" id="PS52019">
    <property type="entry name" value="PKS_MFAS_DH"/>
    <property type="match status" value="1"/>
</dbReference>
<accession>A0A2I1BSV9</accession>
<name>NVFA_ASPN1</name>